<evidence type="ECO:0000250" key="1"/>
<evidence type="ECO:0000255" key="2"/>
<evidence type="ECO:0000269" key="3">
    <source>
    </source>
</evidence>
<evidence type="ECO:0000269" key="4">
    <source>
    </source>
</evidence>
<evidence type="ECO:0000305" key="5"/>
<reference key="1">
    <citation type="journal article" date="1994" name="Glycobiology">
        <title>Cloning and expression of a soluble sialidase from Chinese hamster ovary cells: sequence alignment similarities to bacterial sialidases.</title>
        <authorList>
            <person name="Ferrari J."/>
            <person name="Harris R."/>
            <person name="Warner T.G."/>
        </authorList>
    </citation>
    <scope>NUCLEOTIDE SEQUENCE [MRNA]</scope>
    <source>
        <tissue>Ovary</tissue>
    </source>
</reference>
<reference key="2">
    <citation type="journal article" date="2001" name="Carbohydr. Res.">
        <title>Characterization of cytosolic sialidase from Chinese hamster ovary cells: part I: cloning and expression of soluble sialidase in Escherichia coli.</title>
        <authorList>
            <person name="Burg M."/>
            <person name="Muthing J."/>
        </authorList>
    </citation>
    <scope>CATALYTIC ACTIVITY</scope>
</reference>
<reference key="3">
    <citation type="journal article" date="2001" name="Carbohydr. Res.">
        <title>Characterization of cytosolic sialidase from Chinese hamster ovary cells: part II. Substrate specificity for gangliosides.</title>
        <authorList>
            <person name="Muthing J."/>
            <person name="Burg M."/>
        </authorList>
    </citation>
    <scope>FUNCTION</scope>
    <scope>CATALYTIC ACTIVITY</scope>
</reference>
<keyword id="KW-0119">Carbohydrate metabolism</keyword>
<keyword id="KW-0963">Cytoplasm</keyword>
<keyword id="KW-0326">Glycosidase</keyword>
<keyword id="KW-0378">Hydrolase</keyword>
<keyword id="KW-0442">Lipid degradation</keyword>
<keyword id="KW-0443">Lipid metabolism</keyword>
<keyword id="KW-0677">Repeat</keyword>
<dbReference type="EC" id="3.2.1.18"/>
<dbReference type="EMBL" id="U06143">
    <property type="protein sequence ID" value="AAA19746.1"/>
    <property type="molecule type" value="mRNA"/>
</dbReference>
<dbReference type="PIR" id="A54961">
    <property type="entry name" value="A54961"/>
</dbReference>
<dbReference type="RefSeq" id="NP_001233664.1">
    <property type="nucleotide sequence ID" value="NM_001246735.2"/>
</dbReference>
<dbReference type="SMR" id="Q64393"/>
<dbReference type="CAZy" id="GH33">
    <property type="family name" value="Glycoside Hydrolase Family 33"/>
</dbReference>
<dbReference type="PaxDb" id="10029-NP_001233664.1"/>
<dbReference type="Ensembl" id="ENSCGRT00001030356.1">
    <property type="protein sequence ID" value="ENSCGRP00001026110.1"/>
    <property type="gene ID" value="ENSCGRG00001023529.1"/>
</dbReference>
<dbReference type="GeneID" id="100689301"/>
<dbReference type="KEGG" id="cge:100689301"/>
<dbReference type="CTD" id="4759"/>
<dbReference type="eggNOG" id="ENOG502QSFT">
    <property type="taxonomic scope" value="Eukaryota"/>
</dbReference>
<dbReference type="GeneTree" id="ENSGT00950000182944"/>
<dbReference type="OrthoDB" id="2739686at2759"/>
<dbReference type="Proteomes" id="UP000694386">
    <property type="component" value="Unplaced"/>
</dbReference>
<dbReference type="Proteomes" id="UP001108280">
    <property type="component" value="Chromosome 2"/>
</dbReference>
<dbReference type="GO" id="GO:0005737">
    <property type="term" value="C:cytoplasm"/>
    <property type="evidence" value="ECO:0007669"/>
    <property type="project" value="UniProtKB-SubCell"/>
</dbReference>
<dbReference type="GO" id="GO:0043231">
    <property type="term" value="C:intracellular membrane-bounded organelle"/>
    <property type="evidence" value="ECO:0007669"/>
    <property type="project" value="TreeGrafter"/>
</dbReference>
<dbReference type="GO" id="GO:0016020">
    <property type="term" value="C:membrane"/>
    <property type="evidence" value="ECO:0007669"/>
    <property type="project" value="TreeGrafter"/>
</dbReference>
<dbReference type="GO" id="GO:0004308">
    <property type="term" value="F:exo-alpha-sialidase activity"/>
    <property type="evidence" value="ECO:0000250"/>
    <property type="project" value="UniProtKB"/>
</dbReference>
<dbReference type="GO" id="GO:0006689">
    <property type="term" value="P:ganglioside catabolic process"/>
    <property type="evidence" value="ECO:0000250"/>
    <property type="project" value="UniProtKB"/>
</dbReference>
<dbReference type="GO" id="GO:0009313">
    <property type="term" value="P:oligosaccharide catabolic process"/>
    <property type="evidence" value="ECO:0000250"/>
    <property type="project" value="UniProtKB"/>
</dbReference>
<dbReference type="CDD" id="cd15482">
    <property type="entry name" value="Sialidase_non-viral"/>
    <property type="match status" value="1"/>
</dbReference>
<dbReference type="FunFam" id="2.120.10.10:FF:000002">
    <property type="entry name" value="Neuraminidase 3"/>
    <property type="match status" value="1"/>
</dbReference>
<dbReference type="Gene3D" id="2.120.10.10">
    <property type="match status" value="1"/>
</dbReference>
<dbReference type="InterPro" id="IPR011040">
    <property type="entry name" value="Sialidase"/>
</dbReference>
<dbReference type="InterPro" id="IPR026856">
    <property type="entry name" value="Sialidase_fam"/>
</dbReference>
<dbReference type="InterPro" id="IPR036278">
    <property type="entry name" value="Sialidase_sf"/>
</dbReference>
<dbReference type="PANTHER" id="PTHR10628">
    <property type="entry name" value="SIALIDASE"/>
    <property type="match status" value="1"/>
</dbReference>
<dbReference type="PANTHER" id="PTHR10628:SF6">
    <property type="entry name" value="SIALIDASE-2"/>
    <property type="match status" value="1"/>
</dbReference>
<dbReference type="Pfam" id="PF13088">
    <property type="entry name" value="BNR_2"/>
    <property type="match status" value="1"/>
</dbReference>
<dbReference type="SUPFAM" id="SSF50939">
    <property type="entry name" value="Sialidases"/>
    <property type="match status" value="1"/>
</dbReference>
<feature type="chain" id="PRO_0000208898" description="Sialidase-2">
    <location>
        <begin position="1"/>
        <end position="379"/>
    </location>
</feature>
<feature type="repeat" description="BNR 1">
    <location>
        <begin position="127"/>
        <end position="138"/>
    </location>
</feature>
<feature type="repeat" description="BNR 2">
    <location>
        <begin position="197"/>
        <end position="208"/>
    </location>
</feature>
<feature type="short sequence motif" description="FRIP motif">
    <location>
        <begin position="20"/>
        <end position="23"/>
    </location>
</feature>
<feature type="active site" description="Proton acceptor" evidence="1">
    <location>
        <position position="46"/>
    </location>
</feature>
<feature type="active site" description="Nucleophile" evidence="1">
    <location>
        <position position="333"/>
    </location>
</feature>
<feature type="active site" evidence="2">
    <location>
        <position position="354"/>
    </location>
</feature>
<feature type="binding site" evidence="1">
    <location>
        <position position="21"/>
    </location>
    <ligand>
        <name>substrate</name>
    </ligand>
</feature>
<feature type="binding site" evidence="1">
    <location>
        <position position="41"/>
    </location>
    <ligand>
        <name>substrate</name>
    </ligand>
</feature>
<feature type="binding site" evidence="1">
    <location>
        <position position="179"/>
    </location>
    <ligand>
        <name>substrate</name>
    </ligand>
</feature>
<feature type="binding site" evidence="1">
    <location>
        <position position="181"/>
    </location>
    <ligand>
        <name>substrate</name>
    </ligand>
</feature>
<feature type="binding site" evidence="1">
    <location>
        <position position="218"/>
    </location>
    <ligand>
        <name>substrate</name>
    </ligand>
</feature>
<feature type="binding site" evidence="2">
    <location>
        <position position="237"/>
    </location>
    <ligand>
        <name>substrate</name>
    </ligand>
</feature>
<feature type="binding site" evidence="1">
    <location>
        <position position="303"/>
    </location>
    <ligand>
        <name>substrate</name>
    </ligand>
</feature>
<gene>
    <name type="primary">NEU2</name>
</gene>
<proteinExistence type="evidence at protein level"/>
<name>NEUR2_CRIGR</name>
<organism>
    <name type="scientific">Cricetulus griseus</name>
    <name type="common">Chinese hamster</name>
    <name type="synonym">Cricetulus barabensis griseus</name>
    <dbReference type="NCBI Taxonomy" id="10029"/>
    <lineage>
        <taxon>Eukaryota</taxon>
        <taxon>Metazoa</taxon>
        <taxon>Chordata</taxon>
        <taxon>Craniata</taxon>
        <taxon>Vertebrata</taxon>
        <taxon>Euteleostomi</taxon>
        <taxon>Mammalia</taxon>
        <taxon>Eutheria</taxon>
        <taxon>Euarchontoglires</taxon>
        <taxon>Glires</taxon>
        <taxon>Rodentia</taxon>
        <taxon>Myomorpha</taxon>
        <taxon>Muroidea</taxon>
        <taxon>Cricetidae</taxon>
        <taxon>Cricetinae</taxon>
        <taxon>Cricetulus</taxon>
    </lineage>
</organism>
<comment type="function">
    <text evidence="4">Catalyzes the removal of sialic acid (N-acetylneuraminic acid) moieties from glycoproteins, oligosaccharides and gangliosides.</text>
</comment>
<comment type="catalytic activity">
    <reaction evidence="3 4">
        <text>Hydrolysis of alpha-(2-&gt;3)-, alpha-(2-&gt;6)-, alpha-(2-&gt;8)- glycosidic linkages of terminal sialic acid residues in oligosaccharides, glycoproteins, glycolipids, colominic acid and synthetic substrates.</text>
        <dbReference type="EC" id="3.2.1.18"/>
    </reaction>
</comment>
<comment type="subcellular location">
    <subcellularLocation>
        <location evidence="1">Cytoplasm</location>
    </subcellularLocation>
</comment>
<comment type="similarity">
    <text evidence="5">Belongs to the glycosyl hydrolase 33 family.</text>
</comment>
<protein>
    <recommendedName>
        <fullName>Sialidase-2</fullName>
        <ecNumber>3.2.1.18</ecNumber>
    </recommendedName>
    <alternativeName>
        <fullName>Cytosolic sialidase</fullName>
    </alternativeName>
    <alternativeName>
        <fullName>N-acetyl-alpha-neuraminidase 2</fullName>
    </alternativeName>
</protein>
<accession>Q64393</accession>
<sequence length="379" mass="41962">MATCPVLQKETLFQTGDYAYRIPALIYLSKQKTLLAFAEKRLTKTDEHADLFVLRRGSYNADTHQVQWQAEEVVTQAYLEGHRSMSPCPLYDKQTRTLFLFFIAVRGQISEHHQLQTGVNVTRLCHITSTDHGKTWSAVQDLTDTTIGSTHQDWATFGVGPGHCLQLRNTAGSLLVPAYAYRKQPPIHAPAPSAFCFLSHDHGSTWELGHFVSQNSLECQVAEVGTGAERVVYLNARSCLGARVQAQSPNSGLDFQDNQVVSKLVEPPKGCHGSVIAFPNPTSKADALDVWLLYTHPTDSRKRTNLGVYLNQKPLDPTTWSAPTLLATGICAYSDLQNMGHGPDGSPQFGCLYESNNYEEIVFLMFTLKQAFPAVFGAQ</sequence>